<feature type="chain" id="PRO_1000141573" description="Large ribosomal subunit protein uL2">
    <location>
        <begin position="1"/>
        <end position="278"/>
    </location>
</feature>
<feature type="region of interest" description="Disordered" evidence="2">
    <location>
        <begin position="224"/>
        <end position="262"/>
    </location>
</feature>
<name>RL2_LEPBP</name>
<dbReference type="EMBL" id="CP000786">
    <property type="protein sequence ID" value="ABZ98064.1"/>
    <property type="molecule type" value="Genomic_DNA"/>
</dbReference>
<dbReference type="RefSeq" id="WP_012388937.1">
    <property type="nucleotide sequence ID" value="NC_010602.1"/>
</dbReference>
<dbReference type="SMR" id="B0SSH4"/>
<dbReference type="STRING" id="456481.LEPBI_I1961"/>
<dbReference type="KEGG" id="lbi:LEPBI_I1961"/>
<dbReference type="HOGENOM" id="CLU_036235_2_1_12"/>
<dbReference type="OrthoDB" id="9778722at2"/>
<dbReference type="BioCyc" id="LBIF456481:LEPBI_RS09690-MONOMER"/>
<dbReference type="Proteomes" id="UP000001847">
    <property type="component" value="Chromosome I"/>
</dbReference>
<dbReference type="GO" id="GO:0015934">
    <property type="term" value="C:large ribosomal subunit"/>
    <property type="evidence" value="ECO:0007669"/>
    <property type="project" value="InterPro"/>
</dbReference>
<dbReference type="GO" id="GO:0019843">
    <property type="term" value="F:rRNA binding"/>
    <property type="evidence" value="ECO:0007669"/>
    <property type="project" value="UniProtKB-UniRule"/>
</dbReference>
<dbReference type="GO" id="GO:0003735">
    <property type="term" value="F:structural constituent of ribosome"/>
    <property type="evidence" value="ECO:0007669"/>
    <property type="project" value="InterPro"/>
</dbReference>
<dbReference type="GO" id="GO:0016740">
    <property type="term" value="F:transferase activity"/>
    <property type="evidence" value="ECO:0007669"/>
    <property type="project" value="InterPro"/>
</dbReference>
<dbReference type="GO" id="GO:0002181">
    <property type="term" value="P:cytoplasmic translation"/>
    <property type="evidence" value="ECO:0007669"/>
    <property type="project" value="TreeGrafter"/>
</dbReference>
<dbReference type="FunFam" id="2.30.30.30:FF:000001">
    <property type="entry name" value="50S ribosomal protein L2"/>
    <property type="match status" value="1"/>
</dbReference>
<dbReference type="FunFam" id="2.40.50.140:FF:000003">
    <property type="entry name" value="50S ribosomal protein L2"/>
    <property type="match status" value="1"/>
</dbReference>
<dbReference type="FunFam" id="4.10.950.10:FF:000001">
    <property type="entry name" value="50S ribosomal protein L2"/>
    <property type="match status" value="1"/>
</dbReference>
<dbReference type="Gene3D" id="2.30.30.30">
    <property type="match status" value="1"/>
</dbReference>
<dbReference type="Gene3D" id="2.40.50.140">
    <property type="entry name" value="Nucleic acid-binding proteins"/>
    <property type="match status" value="1"/>
</dbReference>
<dbReference type="Gene3D" id="4.10.950.10">
    <property type="entry name" value="Ribosomal protein L2, domain 3"/>
    <property type="match status" value="1"/>
</dbReference>
<dbReference type="HAMAP" id="MF_01320_B">
    <property type="entry name" value="Ribosomal_uL2_B"/>
    <property type="match status" value="1"/>
</dbReference>
<dbReference type="InterPro" id="IPR012340">
    <property type="entry name" value="NA-bd_OB-fold"/>
</dbReference>
<dbReference type="InterPro" id="IPR014722">
    <property type="entry name" value="Rib_uL2_dom2"/>
</dbReference>
<dbReference type="InterPro" id="IPR002171">
    <property type="entry name" value="Ribosomal_uL2"/>
</dbReference>
<dbReference type="InterPro" id="IPR005880">
    <property type="entry name" value="Ribosomal_uL2_bac/org-type"/>
</dbReference>
<dbReference type="InterPro" id="IPR022669">
    <property type="entry name" value="Ribosomal_uL2_C"/>
</dbReference>
<dbReference type="InterPro" id="IPR022671">
    <property type="entry name" value="Ribosomal_uL2_CS"/>
</dbReference>
<dbReference type="InterPro" id="IPR014726">
    <property type="entry name" value="Ribosomal_uL2_dom3"/>
</dbReference>
<dbReference type="InterPro" id="IPR022666">
    <property type="entry name" value="Ribosomal_uL2_RNA-bd_dom"/>
</dbReference>
<dbReference type="InterPro" id="IPR008991">
    <property type="entry name" value="Translation_prot_SH3-like_sf"/>
</dbReference>
<dbReference type="NCBIfam" id="TIGR01171">
    <property type="entry name" value="rplB_bact"/>
    <property type="match status" value="1"/>
</dbReference>
<dbReference type="PANTHER" id="PTHR13691:SF5">
    <property type="entry name" value="LARGE RIBOSOMAL SUBUNIT PROTEIN UL2M"/>
    <property type="match status" value="1"/>
</dbReference>
<dbReference type="PANTHER" id="PTHR13691">
    <property type="entry name" value="RIBOSOMAL PROTEIN L2"/>
    <property type="match status" value="1"/>
</dbReference>
<dbReference type="Pfam" id="PF00181">
    <property type="entry name" value="Ribosomal_L2"/>
    <property type="match status" value="1"/>
</dbReference>
<dbReference type="Pfam" id="PF03947">
    <property type="entry name" value="Ribosomal_L2_C"/>
    <property type="match status" value="1"/>
</dbReference>
<dbReference type="PIRSF" id="PIRSF002158">
    <property type="entry name" value="Ribosomal_L2"/>
    <property type="match status" value="1"/>
</dbReference>
<dbReference type="SMART" id="SM01383">
    <property type="entry name" value="Ribosomal_L2"/>
    <property type="match status" value="1"/>
</dbReference>
<dbReference type="SMART" id="SM01382">
    <property type="entry name" value="Ribosomal_L2_C"/>
    <property type="match status" value="1"/>
</dbReference>
<dbReference type="SUPFAM" id="SSF50249">
    <property type="entry name" value="Nucleic acid-binding proteins"/>
    <property type="match status" value="1"/>
</dbReference>
<dbReference type="SUPFAM" id="SSF50104">
    <property type="entry name" value="Translation proteins SH3-like domain"/>
    <property type="match status" value="1"/>
</dbReference>
<dbReference type="PROSITE" id="PS00467">
    <property type="entry name" value="RIBOSOMAL_L2"/>
    <property type="match status" value="1"/>
</dbReference>
<organism>
    <name type="scientific">Leptospira biflexa serovar Patoc (strain Patoc 1 / ATCC 23582 / Paris)</name>
    <dbReference type="NCBI Taxonomy" id="456481"/>
    <lineage>
        <taxon>Bacteria</taxon>
        <taxon>Pseudomonadati</taxon>
        <taxon>Spirochaetota</taxon>
        <taxon>Spirochaetia</taxon>
        <taxon>Leptospirales</taxon>
        <taxon>Leptospiraceae</taxon>
        <taxon>Leptospira</taxon>
    </lineage>
</organism>
<keyword id="KW-1185">Reference proteome</keyword>
<keyword id="KW-0687">Ribonucleoprotein</keyword>
<keyword id="KW-0689">Ribosomal protein</keyword>
<keyword id="KW-0694">RNA-binding</keyword>
<keyword id="KW-0699">rRNA-binding</keyword>
<sequence length="278" mass="30939">MGIRKLKPTTQSSRYYSVLDFKEITEVVPYKPLTANISYKAGRDNKGRIAVRRKGGRNKRKFRIIDFKRNKFGIPATVKTIEYDPNRSAFIALVCYADGEYRYILAPNGLKVGDKIESGPAAEIKLGNTLPLDKIPAGTNVHNIELHIGKGGQIARTAGSFAVISAKDGDYVSLKLPSSEIRKVRKECLATIGELSNKDHNLVIIGKAGRNRWLGKRPKVRGVVMNPVDHPLGGGEGRTSGGRHPVTPWGKPTKGFKTRKTRPSDRFIVQRRKKNRNR</sequence>
<comment type="function">
    <text evidence="1">One of the primary rRNA binding proteins. Required for association of the 30S and 50S subunits to form the 70S ribosome, for tRNA binding and peptide bond formation. It has been suggested to have peptidyltransferase activity; this is somewhat controversial. Makes several contacts with the 16S rRNA in the 70S ribosome.</text>
</comment>
<comment type="subunit">
    <text evidence="1">Part of the 50S ribosomal subunit. Forms a bridge to the 30S subunit in the 70S ribosome.</text>
</comment>
<comment type="similarity">
    <text evidence="1">Belongs to the universal ribosomal protein uL2 family.</text>
</comment>
<reference key="1">
    <citation type="journal article" date="2008" name="PLoS ONE">
        <title>Genome sequence of the saprophyte Leptospira biflexa provides insights into the evolution of Leptospira and the pathogenesis of leptospirosis.</title>
        <authorList>
            <person name="Picardeau M."/>
            <person name="Bulach D.M."/>
            <person name="Bouchier C."/>
            <person name="Zuerner R.L."/>
            <person name="Zidane N."/>
            <person name="Wilson P.J."/>
            <person name="Creno S."/>
            <person name="Kuczek E.S."/>
            <person name="Bommezzadri S."/>
            <person name="Davis J.C."/>
            <person name="McGrath A."/>
            <person name="Johnson M.J."/>
            <person name="Boursaux-Eude C."/>
            <person name="Seemann T."/>
            <person name="Rouy Z."/>
            <person name="Coppel R.L."/>
            <person name="Rood J.I."/>
            <person name="Lajus A."/>
            <person name="Davies J.K."/>
            <person name="Medigue C."/>
            <person name="Adler B."/>
        </authorList>
    </citation>
    <scope>NUCLEOTIDE SEQUENCE [LARGE SCALE GENOMIC DNA]</scope>
    <source>
        <strain>Patoc 1 / ATCC 23582 / Paris</strain>
    </source>
</reference>
<accession>B0SSH4</accession>
<proteinExistence type="inferred from homology"/>
<gene>
    <name evidence="1" type="primary">rplB</name>
    <name type="ordered locus">LEPBI_I1961</name>
</gene>
<protein>
    <recommendedName>
        <fullName evidence="1">Large ribosomal subunit protein uL2</fullName>
    </recommendedName>
    <alternativeName>
        <fullName evidence="3">50S ribosomal protein L2</fullName>
    </alternativeName>
</protein>
<evidence type="ECO:0000255" key="1">
    <source>
        <dbReference type="HAMAP-Rule" id="MF_01320"/>
    </source>
</evidence>
<evidence type="ECO:0000256" key="2">
    <source>
        <dbReference type="SAM" id="MobiDB-lite"/>
    </source>
</evidence>
<evidence type="ECO:0000305" key="3"/>